<feature type="chain" id="PRO_0000456487" description="Large ribosomal subunit protein uL2">
    <location>
        <begin position="1"/>
        <end position="254"/>
    </location>
</feature>
<name>RL2_CANAL</name>
<accession>A0A1D8PF08</accession>
<evidence type="ECO:0000269" key="1">
    <source>
    </source>
</evidence>
<evidence type="ECO:0000303" key="2">
    <source>
    </source>
</evidence>
<evidence type="ECO:0000305" key="3"/>
<evidence type="ECO:0000305" key="4">
    <source>
    </source>
</evidence>
<evidence type="ECO:0007744" key="5">
    <source>
        <dbReference type="PDB" id="7PZY"/>
    </source>
</evidence>
<evidence type="ECO:0007744" key="6">
    <source>
        <dbReference type="PDB" id="7Q0F"/>
    </source>
</evidence>
<evidence type="ECO:0007744" key="7">
    <source>
        <dbReference type="PDB" id="7Q0P"/>
    </source>
</evidence>
<gene>
    <name evidence="2" type="primary">RPL2</name>
    <name type="ordered locus">orf19.2309.2</name>
    <name type="ORF">CAALFM_C111060CA</name>
</gene>
<reference key="1">
    <citation type="journal article" date="2004" name="Proc. Natl. Acad. Sci. U.S.A.">
        <title>The diploid genome sequence of Candida albicans.</title>
        <authorList>
            <person name="Jones T."/>
            <person name="Federspiel N.A."/>
            <person name="Chibana H."/>
            <person name="Dungan J."/>
            <person name="Kalman S."/>
            <person name="Magee B.B."/>
            <person name="Newport G."/>
            <person name="Thorstenson Y.R."/>
            <person name="Agabian N."/>
            <person name="Magee P.T."/>
            <person name="Davis R.W."/>
            <person name="Scherer S."/>
        </authorList>
    </citation>
    <scope>NUCLEOTIDE SEQUENCE [LARGE SCALE GENOMIC DNA]</scope>
    <source>
        <strain>SC5314 / ATCC MYA-2876</strain>
    </source>
</reference>
<reference key="2">
    <citation type="journal article" date="2007" name="Genome Biol.">
        <title>Assembly of the Candida albicans genome into sixteen supercontigs aligned on the eight chromosomes.</title>
        <authorList>
            <person name="van het Hoog M."/>
            <person name="Rast T.J."/>
            <person name="Martchenko M."/>
            <person name="Grindle S."/>
            <person name="Dignard D."/>
            <person name="Hogues H."/>
            <person name="Cuomo C."/>
            <person name="Berriman M."/>
            <person name="Scherer S."/>
            <person name="Magee B.B."/>
            <person name="Whiteway M."/>
            <person name="Chibana H."/>
            <person name="Nantel A."/>
            <person name="Magee P.T."/>
        </authorList>
    </citation>
    <scope>GENOME REANNOTATION</scope>
    <source>
        <strain>SC5314 / ATCC MYA-2876</strain>
    </source>
</reference>
<reference key="3">
    <citation type="journal article" date="2013" name="Genome Biol.">
        <title>Assembly of a phased diploid Candida albicans genome facilitates allele-specific measurements and provides a simple model for repeat and indel structure.</title>
        <authorList>
            <person name="Muzzey D."/>
            <person name="Schwartz K."/>
            <person name="Weissman J.S."/>
            <person name="Sherlock G."/>
        </authorList>
    </citation>
    <scope>NUCLEOTIDE SEQUENCE [LARGE SCALE GENOMIC DNA]</scope>
    <scope>GENOME REANNOTATION</scope>
    <source>
        <strain>SC5314 / ATCC MYA-2876</strain>
    </source>
</reference>
<reference evidence="5 6 7" key="4">
    <citation type="journal article" date="2022" name="Sci. Adv.">
        <title>E-site drug specificity of the human pathogen Candida albicans ribosome.</title>
        <authorList>
            <person name="Zgadzay Y."/>
            <person name="Kolosova O."/>
            <person name="Stetsenko A."/>
            <person name="Wu C."/>
            <person name="Bruchlen D."/>
            <person name="Usachev K."/>
            <person name="Validov S."/>
            <person name="Jenner L."/>
            <person name="Rogachev A."/>
            <person name="Yusupova G."/>
            <person name="Sachs M.S."/>
            <person name="Guskov A."/>
            <person name="Yusupov M."/>
        </authorList>
    </citation>
    <scope>STRUCTURE BY ELECTRON MICROSCOPY (2.32 ANGSTROMS) OF THE 80S RIBOSOME</scope>
    <scope>SUBUNIT</scope>
</reference>
<proteinExistence type="evidence at protein level"/>
<keyword id="KW-0002">3D-structure</keyword>
<keyword id="KW-0963">Cytoplasm</keyword>
<keyword id="KW-1185">Reference proteome</keyword>
<keyword id="KW-0687">Ribonucleoprotein</keyword>
<keyword id="KW-0689">Ribosomal protein</keyword>
<comment type="function">
    <text evidence="4">Component of the ribosome, a large ribonucleoprotein complex responsible for the synthesis of proteins in the cell. The small ribosomal subunit (SSU) binds messenger RNAs (mRNAs) and translates the encoded message by selecting cognate aminoacyl-transfer RNA (tRNA) molecules. The large subunit (LSU) contains the ribosomal catalytic site termed the peptidyl transferase center (PTC), which catalyzes the formation of peptide bonds, thereby polymerizing the amino acids delivered by tRNAs into a polypeptide chain. The nascent polypeptides leave the ribosome through a tunnel in the LSU and interact with protein factors that function in enzymatic processing, targeting, and the membrane insertion of nascent chains at the exit of the ribosomal tunnel.</text>
</comment>
<comment type="subunit">
    <text evidence="1">Component of the large ribosomal subunit (PubMed:35613268). Mature ribosomes consist of a small (40S) and a large (60S) subunit (PubMed:35613268). The 40S subunit contains about 32 different proteins and 1 molecule of RNA (18S) (PubMed:35613268). The 60S subunit contains 45 different proteins and 3 molecules of RNA (25S, 5.8S and 5S) (PubMed:35613268).</text>
</comment>
<comment type="subcellular location">
    <subcellularLocation>
        <location evidence="4">Cytoplasm</location>
    </subcellularLocation>
</comment>
<comment type="similarity">
    <text evidence="3">Belongs to the universal ribosomal protein uL2 family.</text>
</comment>
<protein>
    <recommendedName>
        <fullName evidence="2">Large ribosomal subunit protein uL2</fullName>
    </recommendedName>
    <alternativeName>
        <fullName>60S ribosomal protein L2</fullName>
    </alternativeName>
</protein>
<organism>
    <name type="scientific">Candida albicans (strain SC5314 / ATCC MYA-2876)</name>
    <name type="common">Yeast</name>
    <dbReference type="NCBI Taxonomy" id="237561"/>
    <lineage>
        <taxon>Eukaryota</taxon>
        <taxon>Fungi</taxon>
        <taxon>Dikarya</taxon>
        <taxon>Ascomycota</taxon>
        <taxon>Saccharomycotina</taxon>
        <taxon>Pichiomycetes</taxon>
        <taxon>Debaryomycetaceae</taxon>
        <taxon>Candida/Lodderomyces clade</taxon>
        <taxon>Candida</taxon>
    </lineage>
</organism>
<dbReference type="EMBL" id="CP017623">
    <property type="protein sequence ID" value="AOW26732.1"/>
    <property type="molecule type" value="Genomic_DNA"/>
</dbReference>
<dbReference type="RefSeq" id="XP_019330698.1">
    <property type="nucleotide sequence ID" value="XM_019475153.1"/>
</dbReference>
<dbReference type="PDB" id="7PZY">
    <property type="method" value="EM"/>
    <property type="resolution" value="2.32 A"/>
    <property type="chains" value="j=1-254"/>
</dbReference>
<dbReference type="PDB" id="7Q08">
    <property type="method" value="EM"/>
    <property type="resolution" value="2.56 A"/>
    <property type="chains" value="j=1-254"/>
</dbReference>
<dbReference type="PDB" id="7Q0F">
    <property type="method" value="EM"/>
    <property type="resolution" value="2.64 A"/>
    <property type="chains" value="j=1-254"/>
</dbReference>
<dbReference type="PDB" id="7Q0P">
    <property type="method" value="EM"/>
    <property type="resolution" value="2.77 A"/>
    <property type="chains" value="j=1-254"/>
</dbReference>
<dbReference type="PDB" id="7Q0R">
    <property type="method" value="EM"/>
    <property type="resolution" value="2.67 A"/>
    <property type="chains" value="j=1-254"/>
</dbReference>
<dbReference type="PDB" id="8C3A">
    <property type="method" value="X-ray"/>
    <property type="resolution" value="3.00 A"/>
    <property type="chains" value="AW/j=1-254"/>
</dbReference>
<dbReference type="PDB" id="8OGJ">
    <property type="method" value="EM"/>
    <property type="resolution" value="3.10 A"/>
    <property type="chains" value="j=1-254"/>
</dbReference>
<dbReference type="PDB" id="8OH6">
    <property type="method" value="X-ray"/>
    <property type="resolution" value="3.35 A"/>
    <property type="chains" value="AW/j=1-254"/>
</dbReference>
<dbReference type="PDB" id="8OI5">
    <property type="method" value="X-ray"/>
    <property type="resolution" value="2.90 A"/>
    <property type="chains" value="AW/j=1-254"/>
</dbReference>
<dbReference type="PDB" id="8OJ3">
    <property type="method" value="X-ray"/>
    <property type="resolution" value="3.50 A"/>
    <property type="chains" value="AW/j=1-254"/>
</dbReference>
<dbReference type="PDBsum" id="7PZY"/>
<dbReference type="PDBsum" id="7Q08"/>
<dbReference type="PDBsum" id="7Q0F"/>
<dbReference type="PDBsum" id="7Q0P"/>
<dbReference type="PDBsum" id="7Q0R"/>
<dbReference type="PDBsum" id="8C3A"/>
<dbReference type="PDBsum" id="8OGJ"/>
<dbReference type="PDBsum" id="8OH6"/>
<dbReference type="PDBsum" id="8OI5"/>
<dbReference type="PDBsum" id="8OJ3"/>
<dbReference type="SMR" id="A0A1D8PF08"/>
<dbReference type="FunCoup" id="A0A1D8PF08">
    <property type="interactions" value="1307"/>
</dbReference>
<dbReference type="STRING" id="237561.A0A1D8PF08"/>
<dbReference type="EnsemblFungi" id="C1_11060C_A-T">
    <property type="protein sequence ID" value="C1_11060C_A-T-p1"/>
    <property type="gene ID" value="C1_11060C_A"/>
</dbReference>
<dbReference type="GeneID" id="30515049"/>
<dbReference type="KEGG" id="cal:CAALFM_C111060CA"/>
<dbReference type="CGD" id="CAL0000174265">
    <property type="gene designation" value="RPL2"/>
</dbReference>
<dbReference type="VEuPathDB" id="FungiDB:C1_11060C_A"/>
<dbReference type="eggNOG" id="KOG2309">
    <property type="taxonomic scope" value="Eukaryota"/>
</dbReference>
<dbReference type="InParanoid" id="A0A1D8PF08"/>
<dbReference type="OMA" id="HPYKFKM"/>
<dbReference type="OrthoDB" id="10267824at2759"/>
<dbReference type="Proteomes" id="UP000000559">
    <property type="component" value="Chromosome 1"/>
</dbReference>
<dbReference type="GO" id="GO:0022625">
    <property type="term" value="C:cytosolic large ribosomal subunit"/>
    <property type="evidence" value="ECO:0000318"/>
    <property type="project" value="GO_Central"/>
</dbReference>
<dbReference type="GO" id="GO:0003723">
    <property type="term" value="F:RNA binding"/>
    <property type="evidence" value="ECO:0000318"/>
    <property type="project" value="GO_Central"/>
</dbReference>
<dbReference type="GO" id="GO:0003735">
    <property type="term" value="F:structural constituent of ribosome"/>
    <property type="evidence" value="ECO:0000318"/>
    <property type="project" value="GO_Central"/>
</dbReference>
<dbReference type="GO" id="GO:0002181">
    <property type="term" value="P:cytoplasmic translation"/>
    <property type="evidence" value="ECO:0000318"/>
    <property type="project" value="GO_Central"/>
</dbReference>
<dbReference type="FunFam" id="2.40.50.140:FF:000020">
    <property type="entry name" value="60S ribosomal protein L2"/>
    <property type="match status" value="1"/>
</dbReference>
<dbReference type="FunFam" id="4.10.950.10:FF:000002">
    <property type="entry name" value="60S ribosomal protein L2"/>
    <property type="match status" value="1"/>
</dbReference>
<dbReference type="FunFam" id="2.30.30.30:FF:000006">
    <property type="entry name" value="60S ribosomal protein L8"/>
    <property type="match status" value="1"/>
</dbReference>
<dbReference type="Gene3D" id="2.30.30.30">
    <property type="match status" value="1"/>
</dbReference>
<dbReference type="Gene3D" id="2.40.50.140">
    <property type="entry name" value="Nucleic acid-binding proteins"/>
    <property type="match status" value="1"/>
</dbReference>
<dbReference type="Gene3D" id="4.10.950.10">
    <property type="entry name" value="Ribosomal protein L2, domain 3"/>
    <property type="match status" value="1"/>
</dbReference>
<dbReference type="InterPro" id="IPR012340">
    <property type="entry name" value="NA-bd_OB-fold"/>
</dbReference>
<dbReference type="InterPro" id="IPR014722">
    <property type="entry name" value="Rib_uL2_dom2"/>
</dbReference>
<dbReference type="InterPro" id="IPR002171">
    <property type="entry name" value="Ribosomal_uL2"/>
</dbReference>
<dbReference type="InterPro" id="IPR022669">
    <property type="entry name" value="Ribosomal_uL2_C"/>
</dbReference>
<dbReference type="InterPro" id="IPR022671">
    <property type="entry name" value="Ribosomal_uL2_CS"/>
</dbReference>
<dbReference type="InterPro" id="IPR014726">
    <property type="entry name" value="Ribosomal_uL2_dom3"/>
</dbReference>
<dbReference type="InterPro" id="IPR022666">
    <property type="entry name" value="Ribosomal_uL2_RNA-bd_dom"/>
</dbReference>
<dbReference type="InterPro" id="IPR008991">
    <property type="entry name" value="Translation_prot_SH3-like_sf"/>
</dbReference>
<dbReference type="PANTHER" id="PTHR13691:SF16">
    <property type="entry name" value="LARGE RIBOSOMAL SUBUNIT PROTEIN UL2"/>
    <property type="match status" value="1"/>
</dbReference>
<dbReference type="PANTHER" id="PTHR13691">
    <property type="entry name" value="RIBOSOMAL PROTEIN L2"/>
    <property type="match status" value="1"/>
</dbReference>
<dbReference type="Pfam" id="PF00181">
    <property type="entry name" value="Ribosomal_L2"/>
    <property type="match status" value="1"/>
</dbReference>
<dbReference type="Pfam" id="PF03947">
    <property type="entry name" value="Ribosomal_L2_C"/>
    <property type="match status" value="1"/>
</dbReference>
<dbReference type="PIRSF" id="PIRSF002158">
    <property type="entry name" value="Ribosomal_L2"/>
    <property type="match status" value="1"/>
</dbReference>
<dbReference type="SMART" id="SM01383">
    <property type="entry name" value="Ribosomal_L2"/>
    <property type="match status" value="1"/>
</dbReference>
<dbReference type="SMART" id="SM01382">
    <property type="entry name" value="Ribosomal_L2_C"/>
    <property type="match status" value="1"/>
</dbReference>
<dbReference type="SUPFAM" id="SSF50249">
    <property type="entry name" value="Nucleic acid-binding proteins"/>
    <property type="match status" value="1"/>
</dbReference>
<dbReference type="SUPFAM" id="SSF50104">
    <property type="entry name" value="Translation proteins SH3-like domain"/>
    <property type="match status" value="1"/>
</dbReference>
<dbReference type="PROSITE" id="PS00467">
    <property type="entry name" value="RIBOSOMAL_L2"/>
    <property type="match status" value="1"/>
</dbReference>
<sequence length="254" mass="27311">MGRVIRNQRKGAGSIFTSHTRLRKGAAKLRTLDYAERHGYIRGVVKQIIHDPGRGAPLAKVAFRDPYKYKLREETFIANEGVYTGQFIYAGKKASLNVGNILPLGACPEGTIVSNVEEKVGDRGALGRTSGNYVIIIGHNPDENKTRVKLPSGAKKIISSDARGVIGVVAGGGRIDKPLLKAGRAFHKYKVKRNSWPKTRGVAMNPVDHPHGGGNHQHIGKASTISRGAVSGQKAGLIAARRTGLLRGTQKTAE</sequence>